<dbReference type="EMBL" id="AB010694">
    <property type="protein sequence ID" value="BAB09381.1"/>
    <property type="status" value="ALT_INIT"/>
    <property type="molecule type" value="Genomic_DNA"/>
</dbReference>
<dbReference type="EMBL" id="CP002688">
    <property type="protein sequence ID" value="AED94413.1"/>
    <property type="molecule type" value="Genomic_DNA"/>
</dbReference>
<dbReference type="EMBL" id="BT002841">
    <property type="protein sequence ID" value="AAO22660.1"/>
    <property type="molecule type" value="mRNA"/>
</dbReference>
<dbReference type="RefSeq" id="NP_198742.2">
    <property type="nucleotide sequence ID" value="NM_123288.3"/>
</dbReference>
<dbReference type="SMR" id="Q9FL81"/>
<dbReference type="FunCoup" id="Q9FL81">
    <property type="interactions" value="24"/>
</dbReference>
<dbReference type="STRING" id="3702.Q9FL81"/>
<dbReference type="PaxDb" id="3702-AT5G39260.1"/>
<dbReference type="ProteomicsDB" id="222418"/>
<dbReference type="EnsemblPlants" id="AT5G39260.1">
    <property type="protein sequence ID" value="AT5G39260.1"/>
    <property type="gene ID" value="AT5G39260"/>
</dbReference>
<dbReference type="GeneID" id="833922"/>
<dbReference type="Gramene" id="AT5G39260.1">
    <property type="protein sequence ID" value="AT5G39260.1"/>
    <property type="gene ID" value="AT5G39260"/>
</dbReference>
<dbReference type="KEGG" id="ath:AT5G39260"/>
<dbReference type="Araport" id="AT5G39260"/>
<dbReference type="TAIR" id="AT5G39260">
    <property type="gene designation" value="EXPA21"/>
</dbReference>
<dbReference type="eggNOG" id="ENOG502QQNJ">
    <property type="taxonomic scope" value="Eukaryota"/>
</dbReference>
<dbReference type="HOGENOM" id="CLU_027462_0_1_1"/>
<dbReference type="InParanoid" id="Q9FL81"/>
<dbReference type="OMA" id="MATWFMF"/>
<dbReference type="PhylomeDB" id="Q9FL81"/>
<dbReference type="PRO" id="PR:Q9FL81"/>
<dbReference type="Proteomes" id="UP000006548">
    <property type="component" value="Chromosome 5"/>
</dbReference>
<dbReference type="ExpressionAtlas" id="Q9FL81">
    <property type="expression patterns" value="baseline and differential"/>
</dbReference>
<dbReference type="GO" id="GO:0005576">
    <property type="term" value="C:extracellular region"/>
    <property type="evidence" value="ECO:0007669"/>
    <property type="project" value="UniProtKB-KW"/>
</dbReference>
<dbReference type="GO" id="GO:0016020">
    <property type="term" value="C:membrane"/>
    <property type="evidence" value="ECO:0007669"/>
    <property type="project" value="UniProtKB-SubCell"/>
</dbReference>
<dbReference type="GO" id="GO:0009653">
    <property type="term" value="P:anatomical structure morphogenesis"/>
    <property type="evidence" value="ECO:0007669"/>
    <property type="project" value="UniProtKB-ARBA"/>
</dbReference>
<dbReference type="GO" id="GO:0009828">
    <property type="term" value="P:plant-type cell wall loosening"/>
    <property type="evidence" value="ECO:0000250"/>
    <property type="project" value="UniProtKB"/>
</dbReference>
<dbReference type="CDD" id="cd22274">
    <property type="entry name" value="DPBB_EXPA_N"/>
    <property type="match status" value="1"/>
</dbReference>
<dbReference type="Gene3D" id="2.60.40.760">
    <property type="entry name" value="Expansin, cellulose-binding-like domain"/>
    <property type="match status" value="1"/>
</dbReference>
<dbReference type="Gene3D" id="2.40.40.10">
    <property type="entry name" value="RlpA-like domain"/>
    <property type="match status" value="1"/>
</dbReference>
<dbReference type="InterPro" id="IPR007118">
    <property type="entry name" value="Expan_Lol_pI"/>
</dbReference>
<dbReference type="InterPro" id="IPR002963">
    <property type="entry name" value="Expansin"/>
</dbReference>
<dbReference type="InterPro" id="IPR007112">
    <property type="entry name" value="Expansin/allergen_DPBB_dom"/>
</dbReference>
<dbReference type="InterPro" id="IPR007117">
    <property type="entry name" value="Expansin_CBD"/>
</dbReference>
<dbReference type="InterPro" id="IPR036749">
    <property type="entry name" value="Expansin_CBD_sf"/>
</dbReference>
<dbReference type="InterPro" id="IPR009009">
    <property type="entry name" value="RlpA-like_DPBB"/>
</dbReference>
<dbReference type="InterPro" id="IPR036908">
    <property type="entry name" value="RlpA-like_sf"/>
</dbReference>
<dbReference type="PANTHER" id="PTHR31867">
    <property type="entry name" value="EXPANSIN-A15"/>
    <property type="match status" value="1"/>
</dbReference>
<dbReference type="Pfam" id="PF03330">
    <property type="entry name" value="DPBB_1"/>
    <property type="match status" value="1"/>
</dbReference>
<dbReference type="Pfam" id="PF01357">
    <property type="entry name" value="Expansin_C"/>
    <property type="match status" value="1"/>
</dbReference>
<dbReference type="PRINTS" id="PR01226">
    <property type="entry name" value="EXPANSIN"/>
</dbReference>
<dbReference type="PRINTS" id="PR01225">
    <property type="entry name" value="EXPANSNFAMLY"/>
</dbReference>
<dbReference type="SMART" id="SM00837">
    <property type="entry name" value="DPBB_1"/>
    <property type="match status" value="1"/>
</dbReference>
<dbReference type="SUPFAM" id="SSF50685">
    <property type="entry name" value="Barwin-like endoglucanases"/>
    <property type="match status" value="1"/>
</dbReference>
<dbReference type="SUPFAM" id="SSF49590">
    <property type="entry name" value="PHL pollen allergen"/>
    <property type="match status" value="1"/>
</dbReference>
<dbReference type="PROSITE" id="PS50843">
    <property type="entry name" value="EXPANSIN_CBD"/>
    <property type="match status" value="1"/>
</dbReference>
<dbReference type="PROSITE" id="PS50842">
    <property type="entry name" value="EXPANSIN_EG45"/>
    <property type="match status" value="1"/>
</dbReference>
<name>EXP21_ARATH</name>
<comment type="function">
    <text evidence="1">Causes loosening and extension of plant cell walls by disrupting non-covalent bonding between cellulose microfibrils and matrix glucans. No enzymatic activity has been found (By similarity).</text>
</comment>
<comment type="subcellular location">
    <subcellularLocation>
        <location>Secreted</location>
        <location>Cell wall</location>
    </subcellularLocation>
    <subcellularLocation>
        <location>Membrane</location>
        <topology>Peripheral membrane protein</topology>
    </subcellularLocation>
</comment>
<comment type="similarity">
    <text evidence="5">Belongs to the expansin family. Expansin A subfamily.</text>
</comment>
<comment type="sequence caution" evidence="5">
    <conflict type="erroneous initiation">
        <sequence resource="EMBL-CDS" id="BAB09381"/>
    </conflict>
</comment>
<comment type="online information" name="EXPANSIN homepage">
    <link uri="https://www.dept.psu.edu/biology/groups/expansins/index.htm"/>
</comment>
<reference key="1">
    <citation type="journal article" date="1998" name="DNA Res.">
        <title>Structural analysis of Arabidopsis thaliana chromosome 5. V. Sequence features of the regions of 1,381,565 bp covered by twenty one physically assigned P1 and TAC clones.</title>
        <authorList>
            <person name="Kaneko T."/>
            <person name="Kotani H."/>
            <person name="Nakamura Y."/>
            <person name="Sato S."/>
            <person name="Asamizu E."/>
            <person name="Miyajima N."/>
            <person name="Tabata S."/>
        </authorList>
    </citation>
    <scope>NUCLEOTIDE SEQUENCE [LARGE SCALE GENOMIC DNA]</scope>
    <source>
        <strain>cv. Columbia</strain>
    </source>
</reference>
<reference key="2">
    <citation type="journal article" date="2017" name="Plant J.">
        <title>Araport11: a complete reannotation of the Arabidopsis thaliana reference genome.</title>
        <authorList>
            <person name="Cheng C.Y."/>
            <person name="Krishnakumar V."/>
            <person name="Chan A.P."/>
            <person name="Thibaud-Nissen F."/>
            <person name="Schobel S."/>
            <person name="Town C.D."/>
        </authorList>
    </citation>
    <scope>GENOME REANNOTATION</scope>
    <source>
        <strain>cv. Columbia</strain>
    </source>
</reference>
<reference key="3">
    <citation type="journal article" date="2003" name="Science">
        <title>Empirical analysis of transcriptional activity in the Arabidopsis genome.</title>
        <authorList>
            <person name="Yamada K."/>
            <person name="Lim J."/>
            <person name="Dale J.M."/>
            <person name="Chen H."/>
            <person name="Shinn P."/>
            <person name="Palm C.J."/>
            <person name="Southwick A.M."/>
            <person name="Wu H.C."/>
            <person name="Kim C.J."/>
            <person name="Nguyen M."/>
            <person name="Pham P.K."/>
            <person name="Cheuk R.F."/>
            <person name="Karlin-Newmann G."/>
            <person name="Liu S.X."/>
            <person name="Lam B."/>
            <person name="Sakano H."/>
            <person name="Wu T."/>
            <person name="Yu G."/>
            <person name="Miranda M."/>
            <person name="Quach H.L."/>
            <person name="Tripp M."/>
            <person name="Chang C.H."/>
            <person name="Lee J.M."/>
            <person name="Toriumi M.J."/>
            <person name="Chan M.M."/>
            <person name="Tang C.C."/>
            <person name="Onodera C.S."/>
            <person name="Deng J.M."/>
            <person name="Akiyama K."/>
            <person name="Ansari Y."/>
            <person name="Arakawa T."/>
            <person name="Banh J."/>
            <person name="Banno F."/>
            <person name="Bowser L."/>
            <person name="Brooks S.Y."/>
            <person name="Carninci P."/>
            <person name="Chao Q."/>
            <person name="Choy N."/>
            <person name="Enju A."/>
            <person name="Goldsmith A.D."/>
            <person name="Gurjal M."/>
            <person name="Hansen N.F."/>
            <person name="Hayashizaki Y."/>
            <person name="Johnson-Hopson C."/>
            <person name="Hsuan V.W."/>
            <person name="Iida K."/>
            <person name="Karnes M."/>
            <person name="Khan S."/>
            <person name="Koesema E."/>
            <person name="Ishida J."/>
            <person name="Jiang P.X."/>
            <person name="Jones T."/>
            <person name="Kawai J."/>
            <person name="Kamiya A."/>
            <person name="Meyers C."/>
            <person name="Nakajima M."/>
            <person name="Narusaka M."/>
            <person name="Seki M."/>
            <person name="Sakurai T."/>
            <person name="Satou M."/>
            <person name="Tamse R."/>
            <person name="Vaysberg M."/>
            <person name="Wallender E.K."/>
            <person name="Wong C."/>
            <person name="Yamamura Y."/>
            <person name="Yuan S."/>
            <person name="Shinozaki K."/>
            <person name="Davis R.W."/>
            <person name="Theologis A."/>
            <person name="Ecker J.R."/>
        </authorList>
    </citation>
    <scope>NUCLEOTIDE SEQUENCE [LARGE SCALE MRNA]</scope>
    <source>
        <strain>cv. Columbia</strain>
    </source>
</reference>
<reference key="4">
    <citation type="journal article" date="2004" name="Plant Mol. Biol.">
        <title>Nomenclature for members of the expansin superfamily of genes and proteins.</title>
        <authorList>
            <person name="Kende H."/>
            <person name="Bradford K.J."/>
            <person name="Brummell D.A."/>
            <person name="Cho H.-T."/>
            <person name="Cosgrove D.J."/>
            <person name="Fleming A.J."/>
            <person name="Gehring C."/>
            <person name="Lee Y."/>
            <person name="McQueen-Mason S.J."/>
            <person name="Rose J.K.C."/>
            <person name="Voesenek L.A.C."/>
        </authorList>
    </citation>
    <scope>NOMENCLATURE</scope>
</reference>
<evidence type="ECO:0000250" key="1"/>
<evidence type="ECO:0000255" key="2"/>
<evidence type="ECO:0000255" key="3">
    <source>
        <dbReference type="PROSITE-ProRule" id="PRU00078"/>
    </source>
</evidence>
<evidence type="ECO:0000255" key="4">
    <source>
        <dbReference type="PROSITE-ProRule" id="PRU00079"/>
    </source>
</evidence>
<evidence type="ECO:0000305" key="5"/>
<gene>
    <name type="primary">EXPA21</name>
    <name type="synonym">EXP21</name>
    <name type="ordered locus">At5g39260</name>
    <name type="ORF">K3K3.17</name>
    <name type="ORF">K3K3_110</name>
</gene>
<organism>
    <name type="scientific">Arabidopsis thaliana</name>
    <name type="common">Mouse-ear cress</name>
    <dbReference type="NCBI Taxonomy" id="3702"/>
    <lineage>
        <taxon>Eukaryota</taxon>
        <taxon>Viridiplantae</taxon>
        <taxon>Streptophyta</taxon>
        <taxon>Embryophyta</taxon>
        <taxon>Tracheophyta</taxon>
        <taxon>Spermatophyta</taxon>
        <taxon>Magnoliopsida</taxon>
        <taxon>eudicotyledons</taxon>
        <taxon>Gunneridae</taxon>
        <taxon>Pentapetalae</taxon>
        <taxon>rosids</taxon>
        <taxon>malvids</taxon>
        <taxon>Brassicales</taxon>
        <taxon>Brassicaceae</taxon>
        <taxon>Camelineae</taxon>
        <taxon>Arabidopsis</taxon>
    </lineage>
</organism>
<protein>
    <recommendedName>
        <fullName>Expansin-A21</fullName>
        <shortName>AtEXPA21</shortName>
    </recommendedName>
    <alternativeName>
        <fullName>Alpha-expansin-21</fullName>
        <shortName>At-EXP21</shortName>
        <shortName>AtEx21</shortName>
    </alternativeName>
    <alternativeName>
        <fullName>Ath-ExpAlpha-1.20</fullName>
    </alternativeName>
</protein>
<keyword id="KW-0134">Cell wall</keyword>
<keyword id="KW-0961">Cell wall biogenesis/degradation</keyword>
<keyword id="KW-0472">Membrane</keyword>
<keyword id="KW-1185">Reference proteome</keyword>
<keyword id="KW-0964">Secreted</keyword>
<keyword id="KW-0732">Signal</keyword>
<feature type="signal peptide" evidence="2">
    <location>
        <begin position="1"/>
        <end position="29"/>
    </location>
</feature>
<feature type="chain" id="PRO_0000008701" description="Expansin-A21">
    <location>
        <begin position="30"/>
        <end position="262"/>
    </location>
</feature>
<feature type="domain" description="Expansin-like EG45" evidence="4">
    <location>
        <begin position="64"/>
        <end position="169"/>
    </location>
</feature>
<feature type="domain" description="Expansin-like CBD" evidence="3">
    <location>
        <begin position="179"/>
        <end position="258"/>
    </location>
</feature>
<accession>Q9FL81</accession>
<accession>Q84WR9</accession>
<proteinExistence type="evidence at transcript level"/>
<sequence length="262" mass="28134">MKLLEKMTYVECFMIIMATWFMFISYSHGANVAAAPGTNGLDTAWYDARAAYYGDIHGGGTELEGACGYGDLNKHGYGLATAALSTALFNSGASCGACYEIMCSPNPQGCLSGSIKITATDLCPPGSAWCYLPNKHFDLSLPMFIKIAQVKAKMVPVRYRRVPCAKTGGVKFEVKGNPNILTILPYNVGGAGDIIAVSAKGSKTAWVVMSRYWGQNWTTNVNLTGQSVSLRVTTSDGITKDFTDVMPASWGFGQTFDGKTNF</sequence>